<name>FMT_XANC8</name>
<gene>
    <name evidence="1" type="primary">fmt</name>
    <name type="ordered locus">XC_3818</name>
</gene>
<comment type="function">
    <text evidence="1">Attaches a formyl group to the free amino group of methionyl-tRNA(fMet). The formyl group appears to play a dual role in the initiator identity of N-formylmethionyl-tRNA by promoting its recognition by IF2 and preventing the misappropriation of this tRNA by the elongation apparatus.</text>
</comment>
<comment type="catalytic activity">
    <reaction evidence="1">
        <text>L-methionyl-tRNA(fMet) + (6R)-10-formyltetrahydrofolate = N-formyl-L-methionyl-tRNA(fMet) + (6S)-5,6,7,8-tetrahydrofolate + H(+)</text>
        <dbReference type="Rhea" id="RHEA:24380"/>
        <dbReference type="Rhea" id="RHEA-COMP:9952"/>
        <dbReference type="Rhea" id="RHEA-COMP:9953"/>
        <dbReference type="ChEBI" id="CHEBI:15378"/>
        <dbReference type="ChEBI" id="CHEBI:57453"/>
        <dbReference type="ChEBI" id="CHEBI:78530"/>
        <dbReference type="ChEBI" id="CHEBI:78844"/>
        <dbReference type="ChEBI" id="CHEBI:195366"/>
        <dbReference type="EC" id="2.1.2.9"/>
    </reaction>
</comment>
<comment type="similarity">
    <text evidence="1">Belongs to the Fmt family.</text>
</comment>
<feature type="chain" id="PRO_1000020204" description="Methionyl-tRNA formyltransferase">
    <location>
        <begin position="1"/>
        <end position="307"/>
    </location>
</feature>
<feature type="binding site" evidence="1">
    <location>
        <begin position="108"/>
        <end position="111"/>
    </location>
    <ligand>
        <name>(6S)-5,6,7,8-tetrahydrofolate</name>
        <dbReference type="ChEBI" id="CHEBI:57453"/>
    </ligand>
</feature>
<reference key="1">
    <citation type="journal article" date="2005" name="Genome Res.">
        <title>Comparative and functional genomic analyses of the pathogenicity of phytopathogen Xanthomonas campestris pv. campestris.</title>
        <authorList>
            <person name="Qian W."/>
            <person name="Jia Y."/>
            <person name="Ren S.-X."/>
            <person name="He Y.-Q."/>
            <person name="Feng J.-X."/>
            <person name="Lu L.-F."/>
            <person name="Sun Q."/>
            <person name="Ying G."/>
            <person name="Tang D.-J."/>
            <person name="Tang H."/>
            <person name="Wu W."/>
            <person name="Hao P."/>
            <person name="Wang L."/>
            <person name="Jiang B.-L."/>
            <person name="Zeng S."/>
            <person name="Gu W.-Y."/>
            <person name="Lu G."/>
            <person name="Rong L."/>
            <person name="Tian Y."/>
            <person name="Yao Z."/>
            <person name="Fu G."/>
            <person name="Chen B."/>
            <person name="Fang R."/>
            <person name="Qiang B."/>
            <person name="Chen Z."/>
            <person name="Zhao G.-P."/>
            <person name="Tang J.-L."/>
            <person name="He C."/>
        </authorList>
    </citation>
    <scope>NUCLEOTIDE SEQUENCE [LARGE SCALE GENOMIC DNA]</scope>
    <source>
        <strain>8004</strain>
    </source>
</reference>
<accession>Q4UQ15</accession>
<keyword id="KW-0648">Protein biosynthesis</keyword>
<keyword id="KW-0808">Transferase</keyword>
<evidence type="ECO:0000255" key="1">
    <source>
        <dbReference type="HAMAP-Rule" id="MF_00182"/>
    </source>
</evidence>
<dbReference type="EC" id="2.1.2.9" evidence="1"/>
<dbReference type="EMBL" id="CP000050">
    <property type="protein sequence ID" value="AAY50858.1"/>
    <property type="molecule type" value="Genomic_DNA"/>
</dbReference>
<dbReference type="RefSeq" id="WP_011038830.1">
    <property type="nucleotide sequence ID" value="NZ_CP155948.1"/>
</dbReference>
<dbReference type="SMR" id="Q4UQ15"/>
<dbReference type="KEGG" id="xcb:XC_3818"/>
<dbReference type="HOGENOM" id="CLU_033347_1_2_6"/>
<dbReference type="Proteomes" id="UP000000420">
    <property type="component" value="Chromosome"/>
</dbReference>
<dbReference type="GO" id="GO:0005829">
    <property type="term" value="C:cytosol"/>
    <property type="evidence" value="ECO:0007669"/>
    <property type="project" value="TreeGrafter"/>
</dbReference>
<dbReference type="GO" id="GO:0004479">
    <property type="term" value="F:methionyl-tRNA formyltransferase activity"/>
    <property type="evidence" value="ECO:0007669"/>
    <property type="project" value="UniProtKB-UniRule"/>
</dbReference>
<dbReference type="CDD" id="cd08646">
    <property type="entry name" value="FMT_core_Met-tRNA-FMT_N"/>
    <property type="match status" value="1"/>
</dbReference>
<dbReference type="CDD" id="cd08704">
    <property type="entry name" value="Met_tRNA_FMT_C"/>
    <property type="match status" value="1"/>
</dbReference>
<dbReference type="FunFam" id="3.40.50.12230:FF:000001">
    <property type="entry name" value="Methionyl-tRNA formyltransferase"/>
    <property type="match status" value="1"/>
</dbReference>
<dbReference type="FunFam" id="3.40.50.170:FF:000003">
    <property type="entry name" value="Methionyl-tRNA formyltransferase"/>
    <property type="match status" value="1"/>
</dbReference>
<dbReference type="Gene3D" id="3.10.25.10">
    <property type="entry name" value="Formyl transferase, C-terminal domain"/>
    <property type="match status" value="1"/>
</dbReference>
<dbReference type="Gene3D" id="3.40.50.170">
    <property type="entry name" value="Formyl transferase, N-terminal domain"/>
    <property type="match status" value="1"/>
</dbReference>
<dbReference type="HAMAP" id="MF_00182">
    <property type="entry name" value="Formyl_trans"/>
    <property type="match status" value="1"/>
</dbReference>
<dbReference type="InterPro" id="IPR005794">
    <property type="entry name" value="Fmt"/>
</dbReference>
<dbReference type="InterPro" id="IPR005793">
    <property type="entry name" value="Formyl_trans_C"/>
</dbReference>
<dbReference type="InterPro" id="IPR037022">
    <property type="entry name" value="Formyl_trans_C_sf"/>
</dbReference>
<dbReference type="InterPro" id="IPR002376">
    <property type="entry name" value="Formyl_transf_N"/>
</dbReference>
<dbReference type="InterPro" id="IPR036477">
    <property type="entry name" value="Formyl_transf_N_sf"/>
</dbReference>
<dbReference type="InterPro" id="IPR011034">
    <property type="entry name" value="Formyl_transferase-like_C_sf"/>
</dbReference>
<dbReference type="InterPro" id="IPR001555">
    <property type="entry name" value="GART_AS"/>
</dbReference>
<dbReference type="InterPro" id="IPR044135">
    <property type="entry name" value="Met-tRNA-FMT_C"/>
</dbReference>
<dbReference type="InterPro" id="IPR041711">
    <property type="entry name" value="Met-tRNA-FMT_N"/>
</dbReference>
<dbReference type="NCBIfam" id="TIGR00460">
    <property type="entry name" value="fmt"/>
    <property type="match status" value="1"/>
</dbReference>
<dbReference type="PANTHER" id="PTHR11138">
    <property type="entry name" value="METHIONYL-TRNA FORMYLTRANSFERASE"/>
    <property type="match status" value="1"/>
</dbReference>
<dbReference type="PANTHER" id="PTHR11138:SF5">
    <property type="entry name" value="METHIONYL-TRNA FORMYLTRANSFERASE, MITOCHONDRIAL"/>
    <property type="match status" value="1"/>
</dbReference>
<dbReference type="Pfam" id="PF02911">
    <property type="entry name" value="Formyl_trans_C"/>
    <property type="match status" value="1"/>
</dbReference>
<dbReference type="Pfam" id="PF00551">
    <property type="entry name" value="Formyl_trans_N"/>
    <property type="match status" value="1"/>
</dbReference>
<dbReference type="SUPFAM" id="SSF50486">
    <property type="entry name" value="FMT C-terminal domain-like"/>
    <property type="match status" value="1"/>
</dbReference>
<dbReference type="SUPFAM" id="SSF53328">
    <property type="entry name" value="Formyltransferase"/>
    <property type="match status" value="1"/>
</dbReference>
<dbReference type="PROSITE" id="PS00373">
    <property type="entry name" value="GART"/>
    <property type="match status" value="1"/>
</dbReference>
<proteinExistence type="inferred from homology"/>
<organism>
    <name type="scientific">Xanthomonas campestris pv. campestris (strain 8004)</name>
    <dbReference type="NCBI Taxonomy" id="314565"/>
    <lineage>
        <taxon>Bacteria</taxon>
        <taxon>Pseudomonadati</taxon>
        <taxon>Pseudomonadota</taxon>
        <taxon>Gammaproteobacteria</taxon>
        <taxon>Lysobacterales</taxon>
        <taxon>Lysobacteraceae</taxon>
        <taxon>Xanthomonas</taxon>
    </lineage>
</organism>
<sequence length="307" mass="32656">MRIVFAGTPDFAVASLRAAAQRHEVVAVYTQPDRPAGRGRGLTPSPVKLDAIARGIPVFQPQTLRSPEALATLRALQPDLMVVVAYGLILPKAVLAAPTHGCWNVHASLLPRWRGAAPIQRAIEAGDTETGVCLMQMEAGLDTGPVLLSQRVEIGEQETGGQLHDRLAALGAQVLSDGLGLLRAGIRPVAQPQPAEGVTYAHKLDKAQARLDWAQPAEELARRVRAFNPWPVAEAILAGERVRLHGAVALDLAHQQAPGTLLAASKQGIDIACGQGALRVRVLQREGGKAITAADYLNARRDLPALR</sequence>
<protein>
    <recommendedName>
        <fullName evidence="1">Methionyl-tRNA formyltransferase</fullName>
        <ecNumber evidence="1">2.1.2.9</ecNumber>
    </recommendedName>
</protein>